<reference key="1">
    <citation type="journal article" date="1997" name="Eur. J. Biochem.">
        <title>Isolation and identification of multiple neuropeptides of the allatostatin superfamily in the shore crab Carcinus maenas.</title>
        <authorList>
            <person name="Duve H."/>
            <person name="Johnsen A.H."/>
            <person name="Maestro J.-L."/>
            <person name="Scott A.G."/>
            <person name="Jaros P.P."/>
            <person name="Thorpe A."/>
        </authorList>
    </citation>
    <scope>PROTEIN SEQUENCE</scope>
    <scope>AMIDATION AT LEU-8</scope>
    <source>
        <tissue>Cerebral ganglion</tissue>
        <tissue>Thoracic ganglion</tissue>
    </source>
</reference>
<sequence>SGQYSFGL</sequence>
<feature type="peptide" id="PRO_0000043472" description="Carcinustatin-17">
    <location>
        <begin position="1"/>
        <end position="8"/>
    </location>
</feature>
<feature type="modified residue" description="Leucine amide" evidence="1">
    <location>
        <position position="8"/>
    </location>
</feature>
<organism>
    <name type="scientific">Carcinus maenas</name>
    <name type="common">Common shore crab</name>
    <name type="synonym">Green crab</name>
    <dbReference type="NCBI Taxonomy" id="6759"/>
    <lineage>
        <taxon>Eukaryota</taxon>
        <taxon>Metazoa</taxon>
        <taxon>Ecdysozoa</taxon>
        <taxon>Arthropoda</taxon>
        <taxon>Crustacea</taxon>
        <taxon>Multicrustacea</taxon>
        <taxon>Malacostraca</taxon>
        <taxon>Eumalacostraca</taxon>
        <taxon>Eucarida</taxon>
        <taxon>Decapoda</taxon>
        <taxon>Pleocyemata</taxon>
        <taxon>Brachyura</taxon>
        <taxon>Eubrachyura</taxon>
        <taxon>Portunoidea</taxon>
        <taxon>Carcinidae</taxon>
        <taxon>Carcinus</taxon>
    </lineage>
</organism>
<dbReference type="GO" id="GO:0005576">
    <property type="term" value="C:extracellular region"/>
    <property type="evidence" value="ECO:0007669"/>
    <property type="project" value="UniProtKB-SubCell"/>
</dbReference>
<dbReference type="GO" id="GO:0007218">
    <property type="term" value="P:neuropeptide signaling pathway"/>
    <property type="evidence" value="ECO:0007669"/>
    <property type="project" value="UniProtKB-KW"/>
</dbReference>
<accession>P81820</accession>
<protein>
    <recommendedName>
        <fullName>Carcinustatin-17</fullName>
    </recommendedName>
</protein>
<evidence type="ECO:0000269" key="1">
    <source>
    </source>
</evidence>
<evidence type="ECO:0000305" key="2"/>
<proteinExistence type="evidence at protein level"/>
<comment type="function">
    <text>May act as a neurotransmitter or neuromodulator.</text>
</comment>
<comment type="subcellular location">
    <subcellularLocation>
        <location>Secreted</location>
    </subcellularLocation>
</comment>
<comment type="similarity">
    <text evidence="2">Belongs to the allatostatin family.</text>
</comment>
<keyword id="KW-0027">Amidation</keyword>
<keyword id="KW-0903">Direct protein sequencing</keyword>
<keyword id="KW-0527">Neuropeptide</keyword>
<keyword id="KW-0964">Secreted</keyword>
<name>ALL17_CARMA</name>